<reference key="1">
    <citation type="journal article" date="1997" name="Nature">
        <title>The complete genome sequence of the gastric pathogen Helicobacter pylori.</title>
        <authorList>
            <person name="Tomb J.-F."/>
            <person name="White O."/>
            <person name="Kerlavage A.R."/>
            <person name="Clayton R.A."/>
            <person name="Sutton G.G."/>
            <person name="Fleischmann R.D."/>
            <person name="Ketchum K.A."/>
            <person name="Klenk H.-P."/>
            <person name="Gill S.R."/>
            <person name="Dougherty B.A."/>
            <person name="Nelson K.E."/>
            <person name="Quackenbush J."/>
            <person name="Zhou L."/>
            <person name="Kirkness E.F."/>
            <person name="Peterson S.N."/>
            <person name="Loftus B.J."/>
            <person name="Richardson D.L."/>
            <person name="Dodson R.J."/>
            <person name="Khalak H.G."/>
            <person name="Glodek A."/>
            <person name="McKenney K."/>
            <person name="FitzGerald L.M."/>
            <person name="Lee N."/>
            <person name="Adams M.D."/>
            <person name="Hickey E.K."/>
            <person name="Berg D.E."/>
            <person name="Gocayne J.D."/>
            <person name="Utterback T.R."/>
            <person name="Peterson J.D."/>
            <person name="Kelley J.M."/>
            <person name="Cotton M.D."/>
            <person name="Weidman J.F."/>
            <person name="Fujii C."/>
            <person name="Bowman C."/>
            <person name="Watthey L."/>
            <person name="Wallin E."/>
            <person name="Hayes W.S."/>
            <person name="Borodovsky M."/>
            <person name="Karp P.D."/>
            <person name="Smith H.O."/>
            <person name="Fraser C.M."/>
            <person name="Venter J.C."/>
        </authorList>
    </citation>
    <scope>NUCLEOTIDE SEQUENCE [LARGE SCALE GENOMIC DNA]</scope>
    <source>
        <strain>ATCC 700392 / 26695</strain>
    </source>
</reference>
<reference key="2">
    <citation type="journal article" date="2007" name="Proteomics">
        <title>Direct analysis of the extracellular proteome from two strains of Helicobacter pylori.</title>
        <authorList>
            <person name="Smith T.G."/>
            <person name="Lim J.M."/>
            <person name="Weinberg M.V."/>
            <person name="Wells L."/>
            <person name="Hoover T.R."/>
        </authorList>
    </citation>
    <scope>SUBCELLULAR LOCATION</scope>
    <source>
        <strain>ATCC 43504 / NCTC 11637 / JCM 7653 / RPH 13487</strain>
        <strain>ATCC 700392 / 26695</strain>
    </source>
</reference>
<reference key="3">
    <citation type="journal article" date="2021" name="Gut Microbes">
        <title>Helicobacter pylori PqqE is a new virulence factor that cleaves junctional adhesion molecule A and disrupts gastric epithelial integrity.</title>
        <authorList>
            <person name="Marques M.S."/>
            <person name="Costa A.C."/>
            <person name="Osorio H."/>
            <person name="Pinto M.L."/>
            <person name="Relvas S."/>
            <person name="Dinis-Ribeiro M."/>
            <person name="Carneiro F."/>
            <person name="Leite M."/>
            <person name="Figueiredo C."/>
        </authorList>
    </citation>
    <scope>FUNCTION</scope>
    <source>
        <strain>ATCC 700392 / 26695</strain>
    </source>
</reference>
<evidence type="ECO:0000255" key="1"/>
<evidence type="ECO:0000269" key="2">
    <source>
    </source>
</evidence>
<evidence type="ECO:0000269" key="3">
    <source>
    </source>
</evidence>
<evidence type="ECO:0000303" key="4">
    <source>
    </source>
</evidence>
<evidence type="ECO:0000305" key="5"/>
<evidence type="ECO:0000305" key="6">
    <source>
    </source>
</evidence>
<evidence type="ECO:0000312" key="7">
    <source>
        <dbReference type="EMBL" id="AAD07722.1"/>
    </source>
</evidence>
<sequence>MKKFLITLLLGVFMGLQASALTHQEINQAKVPVIYEENHLLPMGFIHLAFRGGGSLSDKNQLGLAKLFAQVLNEGTKELGAVGFAQLLEQKAISLNVDTSTEDLQITLEFLKEYEDEAITRLKELLKSPNFTQNALEKVKTQMLAALLQKESDFDYLAKLTLKQELFANTPLANAALGTKESIQKIKLDDLKQQFAKVFELNKLVVVLGGDLKIDQTLKRLNNALNFLPQGKAYEEPYFETSDKKSEKVLYKDTEQAFVYFGAPFKIKDLKQDLAKSKVMMFVLGGGFGSRLMEKIRVQEGLAYSVYIRSNFSKVAHFASGYLQTKLSTQTKSVALVKKIVKEFIEKGMTQQELDDAKKFLLGSEPLRNETISSRLNTTYNYFYLGLPLNFNQTLLNQIQKMSLKEINDFIKAHTEINDLTFAIVSNKKKDK</sequence>
<dbReference type="EMBL" id="AE000511">
    <property type="protein sequence ID" value="AAD07722.1"/>
    <property type="molecule type" value="Genomic_DNA"/>
</dbReference>
<dbReference type="PIR" id="A64602">
    <property type="entry name" value="A64602"/>
</dbReference>
<dbReference type="RefSeq" id="NP_207451.1">
    <property type="nucleotide sequence ID" value="NC_000915.1"/>
</dbReference>
<dbReference type="RefSeq" id="WP_000714010.1">
    <property type="nucleotide sequence ID" value="NC_018939.1"/>
</dbReference>
<dbReference type="SMR" id="O25371"/>
<dbReference type="IntAct" id="O25371">
    <property type="interactions" value="4"/>
</dbReference>
<dbReference type="MINT" id="O25371"/>
<dbReference type="STRING" id="85962.HP_0657"/>
<dbReference type="PaxDb" id="85962-C694_03395"/>
<dbReference type="EnsemblBacteria" id="AAD07722">
    <property type="protein sequence ID" value="AAD07722"/>
    <property type="gene ID" value="HP_0657"/>
</dbReference>
<dbReference type="KEGG" id="heo:C694_03395"/>
<dbReference type="KEGG" id="hpy:HP_0657"/>
<dbReference type="PATRIC" id="fig|85962.47.peg.707"/>
<dbReference type="eggNOG" id="COG0612">
    <property type="taxonomic scope" value="Bacteria"/>
</dbReference>
<dbReference type="InParanoid" id="O25371"/>
<dbReference type="OrthoDB" id="9811314at2"/>
<dbReference type="PhylomeDB" id="O25371"/>
<dbReference type="PHI-base" id="PHI:11339"/>
<dbReference type="Proteomes" id="UP000000429">
    <property type="component" value="Chromosome"/>
</dbReference>
<dbReference type="GO" id="GO:0005576">
    <property type="term" value="C:extracellular region"/>
    <property type="evidence" value="ECO:0007669"/>
    <property type="project" value="UniProtKB-SubCell"/>
</dbReference>
<dbReference type="GO" id="GO:0046872">
    <property type="term" value="F:metal ion binding"/>
    <property type="evidence" value="ECO:0007669"/>
    <property type="project" value="InterPro"/>
</dbReference>
<dbReference type="Gene3D" id="3.30.830.10">
    <property type="entry name" value="Metalloenzyme, LuxS/M16 peptidase-like"/>
    <property type="match status" value="2"/>
</dbReference>
<dbReference type="InterPro" id="IPR011249">
    <property type="entry name" value="Metalloenz_LuxS/M16"/>
</dbReference>
<dbReference type="InterPro" id="IPR050361">
    <property type="entry name" value="MPP/UQCRC_Complex"/>
</dbReference>
<dbReference type="InterPro" id="IPR011765">
    <property type="entry name" value="Pept_M16_N"/>
</dbReference>
<dbReference type="InterPro" id="IPR007863">
    <property type="entry name" value="Peptidase_M16_C"/>
</dbReference>
<dbReference type="PANTHER" id="PTHR11851">
    <property type="entry name" value="METALLOPROTEASE"/>
    <property type="match status" value="1"/>
</dbReference>
<dbReference type="PANTHER" id="PTHR11851:SF225">
    <property type="entry name" value="NON-PEPTIDASE HOMOLOG YMXG"/>
    <property type="match status" value="1"/>
</dbReference>
<dbReference type="Pfam" id="PF00675">
    <property type="entry name" value="Peptidase_M16"/>
    <property type="match status" value="1"/>
</dbReference>
<dbReference type="Pfam" id="PF05193">
    <property type="entry name" value="Peptidase_M16_C"/>
    <property type="match status" value="1"/>
</dbReference>
<dbReference type="SUPFAM" id="SSF63411">
    <property type="entry name" value="LuxS/MPP-like metallohydrolase"/>
    <property type="match status" value="2"/>
</dbReference>
<gene>
    <name evidence="4" type="primary">ymxG</name>
    <name evidence="7" type="ordered locus">HP_0657</name>
</gene>
<protein>
    <recommendedName>
        <fullName evidence="4">Non-peptidase homolog YmxG</fullName>
    </recommendedName>
</protein>
<comment type="function">
    <text evidence="3">May contribute to the full activity of the protease PqqE.</text>
</comment>
<comment type="subcellular location">
    <subcellularLocation>
        <location evidence="2">Secreted</location>
    </subcellularLocation>
</comment>
<comment type="similarity">
    <text evidence="5">Belongs to the peptidase M16 family.</text>
</comment>
<comment type="caution">
    <text evidence="6">Does not seem to have protease activity as it lacks the conserved zinc-binding sites and the active site.</text>
</comment>
<accession>O25371</accession>
<organism>
    <name type="scientific">Helicobacter pylori (strain ATCC 700392 / 26695)</name>
    <name type="common">Campylobacter pylori</name>
    <dbReference type="NCBI Taxonomy" id="85962"/>
    <lineage>
        <taxon>Bacteria</taxon>
        <taxon>Pseudomonadati</taxon>
        <taxon>Campylobacterota</taxon>
        <taxon>Epsilonproteobacteria</taxon>
        <taxon>Campylobacterales</taxon>
        <taxon>Helicobacteraceae</taxon>
        <taxon>Helicobacter</taxon>
    </lineage>
</organism>
<proteinExistence type="inferred from homology"/>
<feature type="signal peptide" evidence="1">
    <location>
        <begin position="1"/>
        <end position="20"/>
    </location>
</feature>
<feature type="chain" id="PRO_5004157903" description="Non-peptidase homolog YmxG">
    <location>
        <begin position="21"/>
        <end position="432"/>
    </location>
</feature>
<keyword id="KW-1185">Reference proteome</keyword>
<keyword id="KW-0964">Secreted</keyword>
<keyword id="KW-0732">Signal</keyword>
<name>YMXG_HELPY</name>